<sequence>MGHKVNPIGLRLGINRTWDSRWFAGRHEYGKLLHEDIKIREVLEKQLKQAGISKIVIERPHKKCRVAIHTARPGVVIGKKGADIEKLRREIGKITASEVHLNIVEVRKPEIDATLVAENIAQQLERRVAFRRAMKRAVQSAMRLGAGGIRINCAGRLGGAEIARTEWYREGRVPLHTLRADIDYGVATAKTAYGTCGVKVWIYKGEILEHDPMASERRALEGGDSGGGRSRRDDRG</sequence>
<accession>A7HWR7</accession>
<proteinExistence type="inferred from homology"/>
<name>RS3_PARL1</name>
<gene>
    <name evidence="1" type="primary">rpsC</name>
    <name type="ordered locus">Plav_2742</name>
</gene>
<feature type="chain" id="PRO_0000323300" description="Small ribosomal subunit protein uS3">
    <location>
        <begin position="1"/>
        <end position="236"/>
    </location>
</feature>
<feature type="domain" description="KH type-2" evidence="1">
    <location>
        <begin position="39"/>
        <end position="107"/>
    </location>
</feature>
<feature type="region of interest" description="Disordered" evidence="2">
    <location>
        <begin position="214"/>
        <end position="236"/>
    </location>
</feature>
<keyword id="KW-1185">Reference proteome</keyword>
<keyword id="KW-0687">Ribonucleoprotein</keyword>
<keyword id="KW-0689">Ribosomal protein</keyword>
<keyword id="KW-0694">RNA-binding</keyword>
<keyword id="KW-0699">rRNA-binding</keyword>
<protein>
    <recommendedName>
        <fullName evidence="1">Small ribosomal subunit protein uS3</fullName>
    </recommendedName>
    <alternativeName>
        <fullName evidence="3">30S ribosomal protein S3</fullName>
    </alternativeName>
</protein>
<organism>
    <name type="scientific">Parvibaculum lavamentivorans (strain DS-1 / DSM 13023 / NCIMB 13966)</name>
    <dbReference type="NCBI Taxonomy" id="402881"/>
    <lineage>
        <taxon>Bacteria</taxon>
        <taxon>Pseudomonadati</taxon>
        <taxon>Pseudomonadota</taxon>
        <taxon>Alphaproteobacteria</taxon>
        <taxon>Hyphomicrobiales</taxon>
        <taxon>Parvibaculaceae</taxon>
        <taxon>Parvibaculum</taxon>
    </lineage>
</organism>
<comment type="function">
    <text evidence="1">Binds the lower part of the 30S subunit head. Binds mRNA in the 70S ribosome, positioning it for translation.</text>
</comment>
<comment type="subunit">
    <text evidence="1">Part of the 30S ribosomal subunit. Forms a tight complex with proteins S10 and S14.</text>
</comment>
<comment type="similarity">
    <text evidence="1">Belongs to the universal ribosomal protein uS3 family.</text>
</comment>
<reference key="1">
    <citation type="journal article" date="2011" name="Stand. Genomic Sci.">
        <title>Complete genome sequence of Parvibaculum lavamentivorans type strain (DS-1(T)).</title>
        <authorList>
            <person name="Schleheck D."/>
            <person name="Weiss M."/>
            <person name="Pitluck S."/>
            <person name="Bruce D."/>
            <person name="Land M.L."/>
            <person name="Han S."/>
            <person name="Saunders E."/>
            <person name="Tapia R."/>
            <person name="Detter C."/>
            <person name="Brettin T."/>
            <person name="Han J."/>
            <person name="Woyke T."/>
            <person name="Goodwin L."/>
            <person name="Pennacchio L."/>
            <person name="Nolan M."/>
            <person name="Cook A.M."/>
            <person name="Kjelleberg S."/>
            <person name="Thomas T."/>
        </authorList>
    </citation>
    <scope>NUCLEOTIDE SEQUENCE [LARGE SCALE GENOMIC DNA]</scope>
    <source>
        <strain>DS-1 / DSM 13023 / NCIMB 13966</strain>
    </source>
</reference>
<evidence type="ECO:0000255" key="1">
    <source>
        <dbReference type="HAMAP-Rule" id="MF_01309"/>
    </source>
</evidence>
<evidence type="ECO:0000256" key="2">
    <source>
        <dbReference type="SAM" id="MobiDB-lite"/>
    </source>
</evidence>
<evidence type="ECO:0000305" key="3"/>
<dbReference type="EMBL" id="CP000774">
    <property type="protein sequence ID" value="ABS64350.1"/>
    <property type="molecule type" value="Genomic_DNA"/>
</dbReference>
<dbReference type="RefSeq" id="WP_012111664.1">
    <property type="nucleotide sequence ID" value="NC_009719.1"/>
</dbReference>
<dbReference type="SMR" id="A7HWR7"/>
<dbReference type="STRING" id="402881.Plav_2742"/>
<dbReference type="KEGG" id="pla:Plav_2742"/>
<dbReference type="eggNOG" id="COG0092">
    <property type="taxonomic scope" value="Bacteria"/>
</dbReference>
<dbReference type="HOGENOM" id="CLU_058591_0_2_5"/>
<dbReference type="OrthoDB" id="9806396at2"/>
<dbReference type="Proteomes" id="UP000006377">
    <property type="component" value="Chromosome"/>
</dbReference>
<dbReference type="GO" id="GO:0022627">
    <property type="term" value="C:cytosolic small ribosomal subunit"/>
    <property type="evidence" value="ECO:0007669"/>
    <property type="project" value="TreeGrafter"/>
</dbReference>
<dbReference type="GO" id="GO:0003729">
    <property type="term" value="F:mRNA binding"/>
    <property type="evidence" value="ECO:0007669"/>
    <property type="project" value="UniProtKB-UniRule"/>
</dbReference>
<dbReference type="GO" id="GO:0019843">
    <property type="term" value="F:rRNA binding"/>
    <property type="evidence" value="ECO:0007669"/>
    <property type="project" value="UniProtKB-UniRule"/>
</dbReference>
<dbReference type="GO" id="GO:0003735">
    <property type="term" value="F:structural constituent of ribosome"/>
    <property type="evidence" value="ECO:0007669"/>
    <property type="project" value="InterPro"/>
</dbReference>
<dbReference type="GO" id="GO:0006412">
    <property type="term" value="P:translation"/>
    <property type="evidence" value="ECO:0007669"/>
    <property type="project" value="UniProtKB-UniRule"/>
</dbReference>
<dbReference type="CDD" id="cd02412">
    <property type="entry name" value="KH-II_30S_S3"/>
    <property type="match status" value="1"/>
</dbReference>
<dbReference type="FunFam" id="3.30.1140.32:FF:000009">
    <property type="entry name" value="30S ribosomal protein S3"/>
    <property type="match status" value="1"/>
</dbReference>
<dbReference type="FunFam" id="3.30.300.20:FF:000001">
    <property type="entry name" value="30S ribosomal protein S3"/>
    <property type="match status" value="1"/>
</dbReference>
<dbReference type="Gene3D" id="3.30.300.20">
    <property type="match status" value="1"/>
</dbReference>
<dbReference type="Gene3D" id="3.30.1140.32">
    <property type="entry name" value="Ribosomal protein S3, C-terminal domain"/>
    <property type="match status" value="1"/>
</dbReference>
<dbReference type="HAMAP" id="MF_01309_B">
    <property type="entry name" value="Ribosomal_uS3_B"/>
    <property type="match status" value="1"/>
</dbReference>
<dbReference type="InterPro" id="IPR004087">
    <property type="entry name" value="KH_dom"/>
</dbReference>
<dbReference type="InterPro" id="IPR015946">
    <property type="entry name" value="KH_dom-like_a/b"/>
</dbReference>
<dbReference type="InterPro" id="IPR004044">
    <property type="entry name" value="KH_dom_type_2"/>
</dbReference>
<dbReference type="InterPro" id="IPR009019">
    <property type="entry name" value="KH_sf_prok-type"/>
</dbReference>
<dbReference type="InterPro" id="IPR036419">
    <property type="entry name" value="Ribosomal_S3_C_sf"/>
</dbReference>
<dbReference type="InterPro" id="IPR005704">
    <property type="entry name" value="Ribosomal_uS3_bac-typ"/>
</dbReference>
<dbReference type="InterPro" id="IPR001351">
    <property type="entry name" value="Ribosomal_uS3_C"/>
</dbReference>
<dbReference type="InterPro" id="IPR018280">
    <property type="entry name" value="Ribosomal_uS3_CS"/>
</dbReference>
<dbReference type="NCBIfam" id="TIGR01009">
    <property type="entry name" value="rpsC_bact"/>
    <property type="match status" value="1"/>
</dbReference>
<dbReference type="PANTHER" id="PTHR11760">
    <property type="entry name" value="30S/40S RIBOSOMAL PROTEIN S3"/>
    <property type="match status" value="1"/>
</dbReference>
<dbReference type="PANTHER" id="PTHR11760:SF19">
    <property type="entry name" value="SMALL RIBOSOMAL SUBUNIT PROTEIN US3C"/>
    <property type="match status" value="1"/>
</dbReference>
<dbReference type="Pfam" id="PF07650">
    <property type="entry name" value="KH_2"/>
    <property type="match status" value="1"/>
</dbReference>
<dbReference type="Pfam" id="PF00189">
    <property type="entry name" value="Ribosomal_S3_C"/>
    <property type="match status" value="1"/>
</dbReference>
<dbReference type="SMART" id="SM00322">
    <property type="entry name" value="KH"/>
    <property type="match status" value="1"/>
</dbReference>
<dbReference type="SUPFAM" id="SSF54814">
    <property type="entry name" value="Prokaryotic type KH domain (KH-domain type II)"/>
    <property type="match status" value="1"/>
</dbReference>
<dbReference type="SUPFAM" id="SSF54821">
    <property type="entry name" value="Ribosomal protein S3 C-terminal domain"/>
    <property type="match status" value="1"/>
</dbReference>
<dbReference type="PROSITE" id="PS50823">
    <property type="entry name" value="KH_TYPE_2"/>
    <property type="match status" value="1"/>
</dbReference>
<dbReference type="PROSITE" id="PS00548">
    <property type="entry name" value="RIBOSOMAL_S3"/>
    <property type="match status" value="1"/>
</dbReference>